<protein>
    <recommendedName>
        <fullName evidence="1">Eukaryotic translation initiation factor 3 subunit L</fullName>
        <shortName evidence="1">eIF3l</shortName>
    </recommendedName>
</protein>
<comment type="function">
    <text evidence="1">Component of the eukaryotic translation initiation factor 3 (eIF-3) complex, which is involved in protein synthesis of a specialized repertoire of mRNAs and, together with other initiation factors, stimulates binding of mRNA and methionyl-tRNAi to the 40S ribosome. The eIF-3 complex specifically targets and initiates translation of a subset of mRNAs involved in cell proliferation.</text>
</comment>
<comment type="subunit">
    <text evidence="1">Component of the eukaryotic translation initiation factor 3 (eIF-3) complex.</text>
</comment>
<comment type="subcellular location">
    <subcellularLocation>
        <location evidence="1">Cytoplasm</location>
    </subcellularLocation>
</comment>
<comment type="similarity">
    <text evidence="1">Belongs to the eIF-3 subunit L family.</text>
</comment>
<reference key="1">
    <citation type="journal article" date="2011" name="PLoS Genet.">
        <title>Genomic analysis of the necrotrophic fungal pathogens Sclerotinia sclerotiorum and Botrytis cinerea.</title>
        <authorList>
            <person name="Amselem J."/>
            <person name="Cuomo C.A."/>
            <person name="van Kan J.A.L."/>
            <person name="Viaud M."/>
            <person name="Benito E.P."/>
            <person name="Couloux A."/>
            <person name="Coutinho P.M."/>
            <person name="de Vries R.P."/>
            <person name="Dyer P.S."/>
            <person name="Fillinger S."/>
            <person name="Fournier E."/>
            <person name="Gout L."/>
            <person name="Hahn M."/>
            <person name="Kohn L."/>
            <person name="Lapalu N."/>
            <person name="Plummer K.M."/>
            <person name="Pradier J.-M."/>
            <person name="Quevillon E."/>
            <person name="Sharon A."/>
            <person name="Simon A."/>
            <person name="ten Have A."/>
            <person name="Tudzynski B."/>
            <person name="Tudzynski P."/>
            <person name="Wincker P."/>
            <person name="Andrew M."/>
            <person name="Anthouard V."/>
            <person name="Beever R.E."/>
            <person name="Beffa R."/>
            <person name="Benoit I."/>
            <person name="Bouzid O."/>
            <person name="Brault B."/>
            <person name="Chen Z."/>
            <person name="Choquer M."/>
            <person name="Collemare J."/>
            <person name="Cotton P."/>
            <person name="Danchin E.G."/>
            <person name="Da Silva C."/>
            <person name="Gautier A."/>
            <person name="Giraud C."/>
            <person name="Giraud T."/>
            <person name="Gonzalez C."/>
            <person name="Grossetete S."/>
            <person name="Gueldener U."/>
            <person name="Henrissat B."/>
            <person name="Howlett B.J."/>
            <person name="Kodira C."/>
            <person name="Kretschmer M."/>
            <person name="Lappartient A."/>
            <person name="Leroch M."/>
            <person name="Levis C."/>
            <person name="Mauceli E."/>
            <person name="Neuveglise C."/>
            <person name="Oeser B."/>
            <person name="Pearson M."/>
            <person name="Poulain J."/>
            <person name="Poussereau N."/>
            <person name="Quesneville H."/>
            <person name="Rascle C."/>
            <person name="Schumacher J."/>
            <person name="Segurens B."/>
            <person name="Sexton A."/>
            <person name="Silva E."/>
            <person name="Sirven C."/>
            <person name="Soanes D.M."/>
            <person name="Talbot N.J."/>
            <person name="Templeton M."/>
            <person name="Yandava C."/>
            <person name="Yarden O."/>
            <person name="Zeng Q."/>
            <person name="Rollins J.A."/>
            <person name="Lebrun M.-H."/>
            <person name="Dickman M."/>
        </authorList>
    </citation>
    <scope>NUCLEOTIDE SEQUENCE [LARGE SCALE GENOMIC DNA]</scope>
    <source>
        <strain>ATCC 18683 / 1980 / Ss-1</strain>
    </source>
</reference>
<gene>
    <name type="ORF">SS1G_00570</name>
</gene>
<keyword id="KW-0963">Cytoplasm</keyword>
<keyword id="KW-0396">Initiation factor</keyword>
<keyword id="KW-0648">Protein biosynthesis</keyword>
<keyword id="KW-1185">Reference proteome</keyword>
<accession>A7E5J5</accession>
<sequence>MSAFQNGGIASRALDDDSDIEEEALANDYKEQVQYEGMEELEQVNSMSMAQQTDDIQSRLAAAAQPLDFSAPLEVKFASYDNYCSLFHFILNSDGPVDLEPPSYYWAWDVIDEFIYQFNSFCSYRNRVARQGTNEEEIQILREAPNTWGCYSVLNVLYSLIQRSQINEQLAAMRRNEEPMAVAGDYGSKSLYRMLGYFSIIGLLRVHCLLGDFSLALKTLDDIELNKKAMFARVMAAHFTTYYYVGFSYMMMRRYADAIRMFSHILIYVSRTKNFQKNAQYDSISKKNDQMYALIAICVAFHPTRLDDTIHTALREKYGDQLLKLQRGGPESLPIFEELFRSACPKFISPTPPDFDNPELNVDPLEHHLSIFMDEVKTNMWSPTVKSYLRLYTTMDLKKLAGFLEVEPEKLRGWLLVNKQRSRQIRWTDNGLLDGEVVNSNDLDYAMQGDLIHISEAKVGRKLVDWYLRNLARTY</sequence>
<evidence type="ECO:0000255" key="1">
    <source>
        <dbReference type="HAMAP-Rule" id="MF_03011"/>
    </source>
</evidence>
<evidence type="ECO:0000255" key="2">
    <source>
        <dbReference type="PROSITE-ProRule" id="PRU01185"/>
    </source>
</evidence>
<organism>
    <name type="scientific">Sclerotinia sclerotiorum (strain ATCC 18683 / 1980 / Ss-1)</name>
    <name type="common">White mold</name>
    <name type="synonym">Whetzelinia sclerotiorum</name>
    <dbReference type="NCBI Taxonomy" id="665079"/>
    <lineage>
        <taxon>Eukaryota</taxon>
        <taxon>Fungi</taxon>
        <taxon>Dikarya</taxon>
        <taxon>Ascomycota</taxon>
        <taxon>Pezizomycotina</taxon>
        <taxon>Leotiomycetes</taxon>
        <taxon>Helotiales</taxon>
        <taxon>Sclerotiniaceae</taxon>
        <taxon>Sclerotinia</taxon>
    </lineage>
</organism>
<dbReference type="EMBL" id="CH476621">
    <property type="protein sequence ID" value="EDN91167.1"/>
    <property type="molecule type" value="Genomic_DNA"/>
</dbReference>
<dbReference type="RefSeq" id="XP_001598481.1">
    <property type="nucleotide sequence ID" value="XM_001598431.1"/>
</dbReference>
<dbReference type="SMR" id="A7E5J5"/>
<dbReference type="STRING" id="665079.A7E5J5"/>
<dbReference type="EnsemblFungi" id="EDN91167">
    <property type="protein sequence ID" value="EDN91167"/>
    <property type="gene ID" value="SS1G_00570"/>
</dbReference>
<dbReference type="GeneID" id="5495074"/>
<dbReference type="KEGG" id="ssl:SS1G_00570"/>
<dbReference type="VEuPathDB" id="FungiDB:sscle_03g026000"/>
<dbReference type="eggNOG" id="KOG3677">
    <property type="taxonomic scope" value="Eukaryota"/>
</dbReference>
<dbReference type="HOGENOM" id="CLU_029210_2_0_1"/>
<dbReference type="InParanoid" id="A7E5J5"/>
<dbReference type="OMA" id="AGWFIRN"/>
<dbReference type="OrthoDB" id="15082at2759"/>
<dbReference type="Proteomes" id="UP000001312">
    <property type="component" value="Unassembled WGS sequence"/>
</dbReference>
<dbReference type="GO" id="GO:0016282">
    <property type="term" value="C:eukaryotic 43S preinitiation complex"/>
    <property type="evidence" value="ECO:0007669"/>
    <property type="project" value="UniProtKB-UniRule"/>
</dbReference>
<dbReference type="GO" id="GO:0033290">
    <property type="term" value="C:eukaryotic 48S preinitiation complex"/>
    <property type="evidence" value="ECO:0007669"/>
    <property type="project" value="UniProtKB-UniRule"/>
</dbReference>
<dbReference type="GO" id="GO:0005852">
    <property type="term" value="C:eukaryotic translation initiation factor 3 complex"/>
    <property type="evidence" value="ECO:0000318"/>
    <property type="project" value="GO_Central"/>
</dbReference>
<dbReference type="GO" id="GO:0003743">
    <property type="term" value="F:translation initiation factor activity"/>
    <property type="evidence" value="ECO:0007669"/>
    <property type="project" value="UniProtKB-UniRule"/>
</dbReference>
<dbReference type="GO" id="GO:0001732">
    <property type="term" value="P:formation of cytoplasmic translation initiation complex"/>
    <property type="evidence" value="ECO:0007669"/>
    <property type="project" value="UniProtKB-UniRule"/>
</dbReference>
<dbReference type="GO" id="GO:0006413">
    <property type="term" value="P:translational initiation"/>
    <property type="evidence" value="ECO:0000318"/>
    <property type="project" value="GO_Central"/>
</dbReference>
<dbReference type="HAMAP" id="MF_03011">
    <property type="entry name" value="eIF3l"/>
    <property type="match status" value="1"/>
</dbReference>
<dbReference type="InterPro" id="IPR019382">
    <property type="entry name" value="eIF3l"/>
</dbReference>
<dbReference type="InterPro" id="IPR000717">
    <property type="entry name" value="PCI_dom"/>
</dbReference>
<dbReference type="PANTHER" id="PTHR13242">
    <property type="entry name" value="EUKARYOTIC TRANSLATION INITIATION FACTOR 3"/>
    <property type="match status" value="1"/>
</dbReference>
<dbReference type="PANTHER" id="PTHR13242:SF0">
    <property type="entry name" value="EUKARYOTIC TRANSLATION INITIATION FACTOR 3 SUBUNIT L"/>
    <property type="match status" value="1"/>
</dbReference>
<dbReference type="Pfam" id="PF10255">
    <property type="entry name" value="Paf67"/>
    <property type="match status" value="1"/>
</dbReference>
<dbReference type="PROSITE" id="PS50250">
    <property type="entry name" value="PCI"/>
    <property type="match status" value="1"/>
</dbReference>
<name>EIF3L_SCLS1</name>
<feature type="chain" id="PRO_0000366910" description="Eukaryotic translation initiation factor 3 subunit L">
    <location>
        <begin position="1"/>
        <end position="475"/>
    </location>
</feature>
<feature type="domain" description="PCI" evidence="2">
    <location>
        <begin position="257"/>
        <end position="451"/>
    </location>
</feature>
<proteinExistence type="inferred from homology"/>